<evidence type="ECO:0000250" key="1"/>
<evidence type="ECO:0000255" key="2">
    <source>
        <dbReference type="HAMAP-Rule" id="MF_00403"/>
    </source>
</evidence>
<evidence type="ECO:0000305" key="3"/>
<proteinExistence type="inferred from homology"/>
<organism>
    <name type="scientific">Shewanella baltica (strain OS185)</name>
    <dbReference type="NCBI Taxonomy" id="402882"/>
    <lineage>
        <taxon>Bacteria</taxon>
        <taxon>Pseudomonadati</taxon>
        <taxon>Pseudomonadota</taxon>
        <taxon>Gammaproteobacteria</taxon>
        <taxon>Alteromonadales</taxon>
        <taxon>Shewanellaceae</taxon>
        <taxon>Shewanella</taxon>
    </lineage>
</organism>
<accession>A6WHS3</accession>
<gene>
    <name evidence="2" type="primary">rpsL</name>
    <name type="ordered locus">Shew185_0191</name>
</gene>
<comment type="function">
    <text evidence="2">With S4 and S5 plays an important role in translational accuracy.</text>
</comment>
<comment type="function">
    <text evidence="2">Interacts with and stabilizes bases of the 16S rRNA that are involved in tRNA selection in the A site and with the mRNA backbone. Located at the interface of the 30S and 50S subunits, it traverses the body of the 30S subunit contacting proteins on the other side and probably holding the rRNA structure together. The combined cluster of proteins S8, S12 and S17 appears to hold together the shoulder and platform of the 30S subunit.</text>
</comment>
<comment type="subunit">
    <text evidence="2">Part of the 30S ribosomal subunit. Contacts proteins S8 and S17. May interact with IF1 in the 30S initiation complex.</text>
</comment>
<comment type="similarity">
    <text evidence="2">Belongs to the universal ribosomal protein uS12 family.</text>
</comment>
<keyword id="KW-0488">Methylation</keyword>
<keyword id="KW-0687">Ribonucleoprotein</keyword>
<keyword id="KW-0689">Ribosomal protein</keyword>
<keyword id="KW-0694">RNA-binding</keyword>
<keyword id="KW-0699">rRNA-binding</keyword>
<keyword id="KW-0820">tRNA-binding</keyword>
<feature type="chain" id="PRO_1000049810" description="Small ribosomal subunit protein uS12">
    <location>
        <begin position="1"/>
        <end position="124"/>
    </location>
</feature>
<feature type="modified residue" description="3-methylthioaspartic acid" evidence="1">
    <location>
        <position position="89"/>
    </location>
</feature>
<reference key="1">
    <citation type="submission" date="2007-07" db="EMBL/GenBank/DDBJ databases">
        <title>Complete sequence of chromosome of Shewanella baltica OS185.</title>
        <authorList>
            <consortium name="US DOE Joint Genome Institute"/>
            <person name="Copeland A."/>
            <person name="Lucas S."/>
            <person name="Lapidus A."/>
            <person name="Barry K."/>
            <person name="Glavina del Rio T."/>
            <person name="Dalin E."/>
            <person name="Tice H."/>
            <person name="Pitluck S."/>
            <person name="Sims D."/>
            <person name="Brettin T."/>
            <person name="Bruce D."/>
            <person name="Detter J.C."/>
            <person name="Han C."/>
            <person name="Schmutz J."/>
            <person name="Larimer F."/>
            <person name="Land M."/>
            <person name="Hauser L."/>
            <person name="Kyrpides N."/>
            <person name="Mikhailova N."/>
            <person name="Brettar I."/>
            <person name="Rodrigues J."/>
            <person name="Konstantinidis K."/>
            <person name="Tiedje J."/>
            <person name="Richardson P."/>
        </authorList>
    </citation>
    <scope>NUCLEOTIDE SEQUENCE [LARGE SCALE GENOMIC DNA]</scope>
    <source>
        <strain>OS185</strain>
    </source>
</reference>
<sequence length="124" mass="13664">MATVNQLVRKPRAPKVDKTNVPALNACPQKRGVCTRVYTTTPKKPNSALRKVARVRLTNGFEVTSYIGGEGHNLQEHSVILIRGGRVKDLPGVRYHTIRGALDCAGVTSRRQSRSKYGAKRPKS</sequence>
<dbReference type="EMBL" id="CP000753">
    <property type="protein sequence ID" value="ABS06362.1"/>
    <property type="molecule type" value="Genomic_DNA"/>
</dbReference>
<dbReference type="RefSeq" id="WP_006083605.1">
    <property type="nucleotide sequence ID" value="NC_009665.1"/>
</dbReference>
<dbReference type="SMR" id="A6WHS3"/>
<dbReference type="GeneID" id="11770554"/>
<dbReference type="KEGG" id="sbm:Shew185_0191"/>
<dbReference type="HOGENOM" id="CLU_104295_1_2_6"/>
<dbReference type="GO" id="GO:0015935">
    <property type="term" value="C:small ribosomal subunit"/>
    <property type="evidence" value="ECO:0007669"/>
    <property type="project" value="InterPro"/>
</dbReference>
<dbReference type="GO" id="GO:0019843">
    <property type="term" value="F:rRNA binding"/>
    <property type="evidence" value="ECO:0007669"/>
    <property type="project" value="UniProtKB-UniRule"/>
</dbReference>
<dbReference type="GO" id="GO:0003735">
    <property type="term" value="F:structural constituent of ribosome"/>
    <property type="evidence" value="ECO:0007669"/>
    <property type="project" value="InterPro"/>
</dbReference>
<dbReference type="GO" id="GO:0000049">
    <property type="term" value="F:tRNA binding"/>
    <property type="evidence" value="ECO:0007669"/>
    <property type="project" value="UniProtKB-UniRule"/>
</dbReference>
<dbReference type="GO" id="GO:0006412">
    <property type="term" value="P:translation"/>
    <property type="evidence" value="ECO:0007669"/>
    <property type="project" value="UniProtKB-UniRule"/>
</dbReference>
<dbReference type="CDD" id="cd03368">
    <property type="entry name" value="Ribosomal_S12"/>
    <property type="match status" value="1"/>
</dbReference>
<dbReference type="FunFam" id="2.40.50.140:FF:000001">
    <property type="entry name" value="30S ribosomal protein S12"/>
    <property type="match status" value="1"/>
</dbReference>
<dbReference type="Gene3D" id="2.40.50.140">
    <property type="entry name" value="Nucleic acid-binding proteins"/>
    <property type="match status" value="1"/>
</dbReference>
<dbReference type="HAMAP" id="MF_00403_B">
    <property type="entry name" value="Ribosomal_uS12_B"/>
    <property type="match status" value="1"/>
</dbReference>
<dbReference type="InterPro" id="IPR012340">
    <property type="entry name" value="NA-bd_OB-fold"/>
</dbReference>
<dbReference type="InterPro" id="IPR006032">
    <property type="entry name" value="Ribosomal_uS12"/>
</dbReference>
<dbReference type="InterPro" id="IPR005679">
    <property type="entry name" value="Ribosomal_uS12_bac"/>
</dbReference>
<dbReference type="NCBIfam" id="TIGR00981">
    <property type="entry name" value="rpsL_bact"/>
    <property type="match status" value="1"/>
</dbReference>
<dbReference type="PANTHER" id="PTHR11652">
    <property type="entry name" value="30S RIBOSOMAL PROTEIN S12 FAMILY MEMBER"/>
    <property type="match status" value="1"/>
</dbReference>
<dbReference type="Pfam" id="PF00164">
    <property type="entry name" value="Ribosom_S12_S23"/>
    <property type="match status" value="1"/>
</dbReference>
<dbReference type="PIRSF" id="PIRSF002133">
    <property type="entry name" value="Ribosomal_S12/S23"/>
    <property type="match status" value="1"/>
</dbReference>
<dbReference type="PRINTS" id="PR01034">
    <property type="entry name" value="RIBOSOMALS12"/>
</dbReference>
<dbReference type="SUPFAM" id="SSF50249">
    <property type="entry name" value="Nucleic acid-binding proteins"/>
    <property type="match status" value="1"/>
</dbReference>
<dbReference type="PROSITE" id="PS00055">
    <property type="entry name" value="RIBOSOMAL_S12"/>
    <property type="match status" value="1"/>
</dbReference>
<protein>
    <recommendedName>
        <fullName evidence="2">Small ribosomal subunit protein uS12</fullName>
    </recommendedName>
    <alternativeName>
        <fullName evidence="3">30S ribosomal protein S12</fullName>
    </alternativeName>
</protein>
<name>RS12_SHEB8</name>